<accession>B9JZJ6</accession>
<proteinExistence type="inferred from homology"/>
<protein>
    <recommendedName>
        <fullName evidence="1">Apolipoprotein N-acyltransferase</fullName>
        <shortName evidence="1">ALP N-acyltransferase</shortName>
        <ecNumber evidence="1">2.3.1.269</ecNumber>
    </recommendedName>
</protein>
<evidence type="ECO:0000255" key="1">
    <source>
        <dbReference type="HAMAP-Rule" id="MF_01148"/>
    </source>
</evidence>
<name>LNT_ALLAM</name>
<comment type="function">
    <text evidence="1">Catalyzes the phospholipid dependent N-acylation of the N-terminal cysteine of apolipoprotein, the last step in lipoprotein maturation.</text>
</comment>
<comment type="catalytic activity">
    <reaction evidence="1">
        <text>N-terminal S-1,2-diacyl-sn-glyceryl-L-cysteinyl-[lipoprotein] + a glycerophospholipid = N-acyl-S-1,2-diacyl-sn-glyceryl-L-cysteinyl-[lipoprotein] + a 2-acyl-sn-glycero-3-phospholipid + H(+)</text>
        <dbReference type="Rhea" id="RHEA:48228"/>
        <dbReference type="Rhea" id="RHEA-COMP:14681"/>
        <dbReference type="Rhea" id="RHEA-COMP:14684"/>
        <dbReference type="ChEBI" id="CHEBI:15378"/>
        <dbReference type="ChEBI" id="CHEBI:136912"/>
        <dbReference type="ChEBI" id="CHEBI:140656"/>
        <dbReference type="ChEBI" id="CHEBI:140657"/>
        <dbReference type="ChEBI" id="CHEBI:140660"/>
        <dbReference type="EC" id="2.3.1.269"/>
    </reaction>
</comment>
<comment type="pathway">
    <text evidence="1">Protein modification; lipoprotein biosynthesis (N-acyl transfer).</text>
</comment>
<comment type="subcellular location">
    <subcellularLocation>
        <location evidence="1">Cell inner membrane</location>
        <topology evidence="1">Multi-pass membrane protein</topology>
    </subcellularLocation>
</comment>
<comment type="similarity">
    <text evidence="1">Belongs to the CN hydrolase family. Apolipoprotein N-acyltransferase subfamily.</text>
</comment>
<gene>
    <name evidence="1" type="primary">lnt</name>
    <name type="ordered locus">Avi_0442</name>
</gene>
<organism>
    <name type="scientific">Allorhizobium ampelinum (strain ATCC BAA-846 / DSM 112012 / S4)</name>
    <name type="common">Agrobacterium vitis (strain S4)</name>
    <dbReference type="NCBI Taxonomy" id="311402"/>
    <lineage>
        <taxon>Bacteria</taxon>
        <taxon>Pseudomonadati</taxon>
        <taxon>Pseudomonadota</taxon>
        <taxon>Alphaproteobacteria</taxon>
        <taxon>Hyphomicrobiales</taxon>
        <taxon>Rhizobiaceae</taxon>
        <taxon>Rhizobium/Agrobacterium group</taxon>
        <taxon>Allorhizobium</taxon>
        <taxon>Allorhizobium ampelinum</taxon>
    </lineage>
</organism>
<feature type="chain" id="PRO_1000164160" description="Apolipoprotein N-acyltransferase">
    <location>
        <begin position="1"/>
        <end position="528"/>
    </location>
</feature>
<feature type="transmembrane region" description="Helical" evidence="1">
    <location>
        <begin position="8"/>
        <end position="28"/>
    </location>
</feature>
<feature type="transmembrane region" description="Helical" evidence="1">
    <location>
        <begin position="69"/>
        <end position="89"/>
    </location>
</feature>
<feature type="transmembrane region" description="Helical" evidence="1">
    <location>
        <begin position="99"/>
        <end position="119"/>
    </location>
</feature>
<feature type="transmembrane region" description="Helical" evidence="1">
    <location>
        <begin position="178"/>
        <end position="198"/>
    </location>
</feature>
<feature type="transmembrane region" description="Helical" evidence="1">
    <location>
        <begin position="203"/>
        <end position="223"/>
    </location>
</feature>
<feature type="domain" description="CN hydrolase" evidence="1">
    <location>
        <begin position="241"/>
        <end position="490"/>
    </location>
</feature>
<feature type="active site" description="Proton acceptor" evidence="1">
    <location>
        <position position="285"/>
    </location>
</feature>
<feature type="active site" evidence="1">
    <location>
        <position position="349"/>
    </location>
</feature>
<feature type="active site" description="Nucleophile" evidence="1">
    <location>
        <position position="402"/>
    </location>
</feature>
<reference key="1">
    <citation type="journal article" date="2009" name="J. Bacteriol.">
        <title>Genome sequences of three Agrobacterium biovars help elucidate the evolution of multichromosome genomes in bacteria.</title>
        <authorList>
            <person name="Slater S.C."/>
            <person name="Goldman B.S."/>
            <person name="Goodner B."/>
            <person name="Setubal J.C."/>
            <person name="Farrand S.K."/>
            <person name="Nester E.W."/>
            <person name="Burr T.J."/>
            <person name="Banta L."/>
            <person name="Dickerman A.W."/>
            <person name="Paulsen I."/>
            <person name="Otten L."/>
            <person name="Suen G."/>
            <person name="Welch R."/>
            <person name="Almeida N.F."/>
            <person name="Arnold F."/>
            <person name="Burton O.T."/>
            <person name="Du Z."/>
            <person name="Ewing A."/>
            <person name="Godsy E."/>
            <person name="Heisel S."/>
            <person name="Houmiel K.L."/>
            <person name="Jhaveri J."/>
            <person name="Lu J."/>
            <person name="Miller N.M."/>
            <person name="Norton S."/>
            <person name="Chen Q."/>
            <person name="Phoolcharoen W."/>
            <person name="Ohlin V."/>
            <person name="Ondrusek D."/>
            <person name="Pride N."/>
            <person name="Stricklin S.L."/>
            <person name="Sun J."/>
            <person name="Wheeler C."/>
            <person name="Wilson L."/>
            <person name="Zhu H."/>
            <person name="Wood D.W."/>
        </authorList>
    </citation>
    <scope>NUCLEOTIDE SEQUENCE [LARGE SCALE GENOMIC DNA]</scope>
    <source>
        <strain>ATCC BAA-846 / DSM 112012 / S4</strain>
    </source>
</reference>
<sequence length="528" mass="56708">MERLAARIMLLAGWRRALLAIASGAVGALALPPVGFFAALFFSFSMLVWLLDGVSGNPDRSWSRGLRSAFWIGWLFGFGYFVAGLWWLGNALMVEADEFAWALPLAVLGLPAVLAVFYGLACLAARLLWSEGLGRIAALAAMFGITEWLRSFIATGFPWNAIGYGAMPIPLMMQSAAVLGLFGVSALAVFVFAAPALLGTRRGAKLGLALAGILFCGHLGYGAYRLSLPEPDGRKVTVRLVQPNIDQAAKMDDTDRVAIFEKHLRLTAVPTPADQPRPDVIVWPETTIPFILTENPDALRQIAGALQEGQVLITGTVRSEDQGAGIAPRYYNSIYAIDSQGQILAAADKVHLVPFGEYVPWQDILSKLGITNIIDLPGGFSQGASRSLMTLPGGLKLYPLICYEVIFPDEMVKGLSGANAIINVTNDAWFGDTPGPFQHFQQARLRAVETGLPIIRAANNGISALIDGRGRVFSGLRLNAEGVENATFTLSAAPETNVNHNKCNFWAVTALLLSAAVISRLGLISRVN</sequence>
<keyword id="KW-0012">Acyltransferase</keyword>
<keyword id="KW-0997">Cell inner membrane</keyword>
<keyword id="KW-1003">Cell membrane</keyword>
<keyword id="KW-0472">Membrane</keyword>
<keyword id="KW-1185">Reference proteome</keyword>
<keyword id="KW-0808">Transferase</keyword>
<keyword id="KW-0812">Transmembrane</keyword>
<keyword id="KW-1133">Transmembrane helix</keyword>
<dbReference type="EC" id="2.3.1.269" evidence="1"/>
<dbReference type="EMBL" id="CP000633">
    <property type="protein sequence ID" value="ACM35308.1"/>
    <property type="molecule type" value="Genomic_DNA"/>
</dbReference>
<dbReference type="RefSeq" id="WP_012654838.1">
    <property type="nucleotide sequence ID" value="NC_011989.1"/>
</dbReference>
<dbReference type="SMR" id="B9JZJ6"/>
<dbReference type="STRING" id="311402.Avi_0442"/>
<dbReference type="KEGG" id="avi:Avi_0442"/>
<dbReference type="eggNOG" id="COG0815">
    <property type="taxonomic scope" value="Bacteria"/>
</dbReference>
<dbReference type="HOGENOM" id="CLU_019563_3_1_5"/>
<dbReference type="UniPathway" id="UPA00666"/>
<dbReference type="Proteomes" id="UP000001596">
    <property type="component" value="Chromosome 1"/>
</dbReference>
<dbReference type="GO" id="GO:0005886">
    <property type="term" value="C:plasma membrane"/>
    <property type="evidence" value="ECO:0007669"/>
    <property type="project" value="UniProtKB-SubCell"/>
</dbReference>
<dbReference type="GO" id="GO:0016410">
    <property type="term" value="F:N-acyltransferase activity"/>
    <property type="evidence" value="ECO:0007669"/>
    <property type="project" value="UniProtKB-UniRule"/>
</dbReference>
<dbReference type="GO" id="GO:0042158">
    <property type="term" value="P:lipoprotein biosynthetic process"/>
    <property type="evidence" value="ECO:0007669"/>
    <property type="project" value="UniProtKB-UniRule"/>
</dbReference>
<dbReference type="CDD" id="cd07571">
    <property type="entry name" value="ALP_N-acyl_transferase"/>
    <property type="match status" value="1"/>
</dbReference>
<dbReference type="Gene3D" id="3.60.110.10">
    <property type="entry name" value="Carbon-nitrogen hydrolase"/>
    <property type="match status" value="1"/>
</dbReference>
<dbReference type="HAMAP" id="MF_01148">
    <property type="entry name" value="Lnt"/>
    <property type="match status" value="1"/>
</dbReference>
<dbReference type="InterPro" id="IPR004563">
    <property type="entry name" value="Apolipo_AcylTrfase"/>
</dbReference>
<dbReference type="InterPro" id="IPR003010">
    <property type="entry name" value="C-N_Hydrolase"/>
</dbReference>
<dbReference type="InterPro" id="IPR036526">
    <property type="entry name" value="C-N_Hydrolase_sf"/>
</dbReference>
<dbReference type="InterPro" id="IPR045378">
    <property type="entry name" value="LNT_N"/>
</dbReference>
<dbReference type="NCBIfam" id="TIGR00546">
    <property type="entry name" value="lnt"/>
    <property type="match status" value="1"/>
</dbReference>
<dbReference type="PANTHER" id="PTHR38686">
    <property type="entry name" value="APOLIPOPROTEIN N-ACYLTRANSFERASE"/>
    <property type="match status" value="1"/>
</dbReference>
<dbReference type="PANTHER" id="PTHR38686:SF1">
    <property type="entry name" value="APOLIPOPROTEIN N-ACYLTRANSFERASE"/>
    <property type="match status" value="1"/>
</dbReference>
<dbReference type="Pfam" id="PF00795">
    <property type="entry name" value="CN_hydrolase"/>
    <property type="match status" value="1"/>
</dbReference>
<dbReference type="Pfam" id="PF20154">
    <property type="entry name" value="LNT_N"/>
    <property type="match status" value="1"/>
</dbReference>
<dbReference type="SUPFAM" id="SSF56317">
    <property type="entry name" value="Carbon-nitrogen hydrolase"/>
    <property type="match status" value="1"/>
</dbReference>
<dbReference type="PROSITE" id="PS50263">
    <property type="entry name" value="CN_HYDROLASE"/>
    <property type="match status" value="1"/>
</dbReference>